<evidence type="ECO:0000255" key="1">
    <source>
        <dbReference type="HAMAP-Rule" id="MF_00360"/>
    </source>
</evidence>
<evidence type="ECO:0000256" key="2">
    <source>
        <dbReference type="SAM" id="MobiDB-lite"/>
    </source>
</evidence>
<evidence type="ECO:0000305" key="3"/>
<sequence length="121" mass="13529">MTQQPYYETMYILRPDIPEEEVESHVTKYRDILTEAGAEVLDNQMRGKRRLAYPIAKHKEGIYVQLSHNGDGQQVGVIEKAMRLSEDVIRYLTVKQEGPLPAPRVAPGTEAPAEPEAAAPA</sequence>
<dbReference type="EMBL" id="CP000435">
    <property type="protein sequence ID" value="ABI45497.1"/>
    <property type="molecule type" value="Genomic_DNA"/>
</dbReference>
<dbReference type="RefSeq" id="WP_011620813.1">
    <property type="nucleotide sequence ID" value="NC_008319.1"/>
</dbReference>
<dbReference type="SMR" id="Q0I609"/>
<dbReference type="STRING" id="64471.sync_2926"/>
<dbReference type="KEGG" id="syg:sync_2926"/>
<dbReference type="eggNOG" id="COG0360">
    <property type="taxonomic scope" value="Bacteria"/>
</dbReference>
<dbReference type="HOGENOM" id="CLU_113441_4_2_3"/>
<dbReference type="OrthoDB" id="9812702at2"/>
<dbReference type="Proteomes" id="UP000001961">
    <property type="component" value="Chromosome"/>
</dbReference>
<dbReference type="GO" id="GO:0005737">
    <property type="term" value="C:cytoplasm"/>
    <property type="evidence" value="ECO:0007669"/>
    <property type="project" value="UniProtKB-ARBA"/>
</dbReference>
<dbReference type="GO" id="GO:1990904">
    <property type="term" value="C:ribonucleoprotein complex"/>
    <property type="evidence" value="ECO:0007669"/>
    <property type="project" value="UniProtKB-KW"/>
</dbReference>
<dbReference type="GO" id="GO:0005840">
    <property type="term" value="C:ribosome"/>
    <property type="evidence" value="ECO:0007669"/>
    <property type="project" value="UniProtKB-KW"/>
</dbReference>
<dbReference type="GO" id="GO:0070181">
    <property type="term" value="F:small ribosomal subunit rRNA binding"/>
    <property type="evidence" value="ECO:0007669"/>
    <property type="project" value="TreeGrafter"/>
</dbReference>
<dbReference type="GO" id="GO:0003735">
    <property type="term" value="F:structural constituent of ribosome"/>
    <property type="evidence" value="ECO:0007669"/>
    <property type="project" value="InterPro"/>
</dbReference>
<dbReference type="GO" id="GO:0006412">
    <property type="term" value="P:translation"/>
    <property type="evidence" value="ECO:0007669"/>
    <property type="project" value="UniProtKB-UniRule"/>
</dbReference>
<dbReference type="CDD" id="cd15487">
    <property type="entry name" value="bS6_chloro_cyano"/>
    <property type="match status" value="1"/>
</dbReference>
<dbReference type="Gene3D" id="3.30.70.60">
    <property type="match status" value="1"/>
</dbReference>
<dbReference type="HAMAP" id="MF_00360">
    <property type="entry name" value="Ribosomal_bS6"/>
    <property type="match status" value="1"/>
</dbReference>
<dbReference type="InterPro" id="IPR000529">
    <property type="entry name" value="Ribosomal_bS6"/>
</dbReference>
<dbReference type="InterPro" id="IPR020815">
    <property type="entry name" value="Ribosomal_bS6_CS"/>
</dbReference>
<dbReference type="InterPro" id="IPR035980">
    <property type="entry name" value="Ribosomal_bS6_sf"/>
</dbReference>
<dbReference type="InterPro" id="IPR020814">
    <property type="entry name" value="Ribosomal_S6_plastid/chlpt"/>
</dbReference>
<dbReference type="InterPro" id="IPR014717">
    <property type="entry name" value="Transl_elong_EF1B/ribsomal_bS6"/>
</dbReference>
<dbReference type="NCBIfam" id="TIGR00166">
    <property type="entry name" value="S6"/>
    <property type="match status" value="1"/>
</dbReference>
<dbReference type="PANTHER" id="PTHR21011">
    <property type="entry name" value="MITOCHONDRIAL 28S RIBOSOMAL PROTEIN S6"/>
    <property type="match status" value="1"/>
</dbReference>
<dbReference type="PANTHER" id="PTHR21011:SF1">
    <property type="entry name" value="SMALL RIBOSOMAL SUBUNIT PROTEIN BS6M"/>
    <property type="match status" value="1"/>
</dbReference>
<dbReference type="Pfam" id="PF01250">
    <property type="entry name" value="Ribosomal_S6"/>
    <property type="match status" value="1"/>
</dbReference>
<dbReference type="SUPFAM" id="SSF54995">
    <property type="entry name" value="Ribosomal protein S6"/>
    <property type="match status" value="1"/>
</dbReference>
<dbReference type="PROSITE" id="PS01048">
    <property type="entry name" value="RIBOSOMAL_S6"/>
    <property type="match status" value="1"/>
</dbReference>
<reference key="1">
    <citation type="journal article" date="2006" name="Proc. Natl. Acad. Sci. U.S.A.">
        <title>Genome sequence of Synechococcus CC9311: insights into adaptation to a coastal environment.</title>
        <authorList>
            <person name="Palenik B."/>
            <person name="Ren Q."/>
            <person name="Dupont C.L."/>
            <person name="Myers G.S."/>
            <person name="Heidelberg J.F."/>
            <person name="Badger J.H."/>
            <person name="Madupu R."/>
            <person name="Nelson W.C."/>
            <person name="Brinkac L.M."/>
            <person name="Dodson R.J."/>
            <person name="Durkin A.S."/>
            <person name="Daugherty S.C."/>
            <person name="Sullivan S.A."/>
            <person name="Khouri H."/>
            <person name="Mohamoud Y."/>
            <person name="Halpin R."/>
            <person name="Paulsen I.T."/>
        </authorList>
    </citation>
    <scope>NUCLEOTIDE SEQUENCE [LARGE SCALE GENOMIC DNA]</scope>
    <source>
        <strain>CC9311</strain>
    </source>
</reference>
<organism>
    <name type="scientific">Synechococcus sp. (strain CC9311)</name>
    <dbReference type="NCBI Taxonomy" id="64471"/>
    <lineage>
        <taxon>Bacteria</taxon>
        <taxon>Bacillati</taxon>
        <taxon>Cyanobacteriota</taxon>
        <taxon>Cyanophyceae</taxon>
        <taxon>Synechococcales</taxon>
        <taxon>Synechococcaceae</taxon>
        <taxon>Synechococcus</taxon>
    </lineage>
</organism>
<keyword id="KW-1185">Reference proteome</keyword>
<keyword id="KW-0687">Ribonucleoprotein</keyword>
<keyword id="KW-0689">Ribosomal protein</keyword>
<keyword id="KW-0694">RNA-binding</keyword>
<keyword id="KW-0699">rRNA-binding</keyword>
<feature type="chain" id="PRO_1000005376" description="Small ribosomal subunit protein bS6">
    <location>
        <begin position="1"/>
        <end position="121"/>
    </location>
</feature>
<feature type="region of interest" description="Disordered" evidence="2">
    <location>
        <begin position="99"/>
        <end position="121"/>
    </location>
</feature>
<feature type="compositionally biased region" description="Low complexity" evidence="2">
    <location>
        <begin position="110"/>
        <end position="121"/>
    </location>
</feature>
<proteinExistence type="inferred from homology"/>
<protein>
    <recommendedName>
        <fullName evidence="1">Small ribosomal subunit protein bS6</fullName>
    </recommendedName>
    <alternativeName>
        <fullName evidence="3">30S ribosomal protein S6</fullName>
    </alternativeName>
</protein>
<name>RS6_SYNS3</name>
<gene>
    <name evidence="1" type="primary">rpsF</name>
    <name evidence="1" type="synonym">rps6</name>
    <name type="ordered locus">sync_2926</name>
</gene>
<comment type="function">
    <text evidence="1">Binds together with bS18 to 16S ribosomal RNA.</text>
</comment>
<comment type="similarity">
    <text evidence="1">Belongs to the bacterial ribosomal protein bS6 family.</text>
</comment>
<accession>Q0I609</accession>